<proteinExistence type="inferred from homology"/>
<comment type="subunit">
    <text evidence="1">Part of the 50S ribosomal subunit. Contacts protein L32.</text>
</comment>
<comment type="similarity">
    <text evidence="1">Belongs to the bacterial ribosomal protein bL17 family.</text>
</comment>
<dbReference type="EMBL" id="CP000230">
    <property type="protein sequence ID" value="ABC23460.1"/>
    <property type="molecule type" value="Genomic_DNA"/>
</dbReference>
<dbReference type="RefSeq" id="WP_011390413.1">
    <property type="nucleotide sequence ID" value="NC_007643.1"/>
</dbReference>
<dbReference type="RefSeq" id="YP_427747.1">
    <property type="nucleotide sequence ID" value="NC_007643.1"/>
</dbReference>
<dbReference type="SMR" id="Q2RQY5"/>
<dbReference type="STRING" id="269796.Rru_A2663"/>
<dbReference type="EnsemblBacteria" id="ABC23460">
    <property type="protein sequence ID" value="ABC23460"/>
    <property type="gene ID" value="Rru_A2663"/>
</dbReference>
<dbReference type="KEGG" id="rru:Rru_A2663"/>
<dbReference type="PATRIC" id="fig|269796.9.peg.2770"/>
<dbReference type="eggNOG" id="COG0203">
    <property type="taxonomic scope" value="Bacteria"/>
</dbReference>
<dbReference type="HOGENOM" id="CLU_074407_2_0_5"/>
<dbReference type="PhylomeDB" id="Q2RQY5"/>
<dbReference type="Proteomes" id="UP000001929">
    <property type="component" value="Chromosome"/>
</dbReference>
<dbReference type="GO" id="GO:0022625">
    <property type="term" value="C:cytosolic large ribosomal subunit"/>
    <property type="evidence" value="ECO:0007669"/>
    <property type="project" value="TreeGrafter"/>
</dbReference>
<dbReference type="GO" id="GO:0003735">
    <property type="term" value="F:structural constituent of ribosome"/>
    <property type="evidence" value="ECO:0007669"/>
    <property type="project" value="InterPro"/>
</dbReference>
<dbReference type="GO" id="GO:0006412">
    <property type="term" value="P:translation"/>
    <property type="evidence" value="ECO:0007669"/>
    <property type="project" value="UniProtKB-UniRule"/>
</dbReference>
<dbReference type="FunFam" id="3.90.1030.10:FF:000001">
    <property type="entry name" value="50S ribosomal protein L17"/>
    <property type="match status" value="1"/>
</dbReference>
<dbReference type="Gene3D" id="3.90.1030.10">
    <property type="entry name" value="Ribosomal protein L17"/>
    <property type="match status" value="1"/>
</dbReference>
<dbReference type="HAMAP" id="MF_01368">
    <property type="entry name" value="Ribosomal_bL17"/>
    <property type="match status" value="1"/>
</dbReference>
<dbReference type="InterPro" id="IPR000456">
    <property type="entry name" value="Ribosomal_bL17"/>
</dbReference>
<dbReference type="InterPro" id="IPR047859">
    <property type="entry name" value="Ribosomal_bL17_CS"/>
</dbReference>
<dbReference type="InterPro" id="IPR036373">
    <property type="entry name" value="Ribosomal_bL17_sf"/>
</dbReference>
<dbReference type="NCBIfam" id="TIGR00059">
    <property type="entry name" value="L17"/>
    <property type="match status" value="1"/>
</dbReference>
<dbReference type="PANTHER" id="PTHR14413:SF16">
    <property type="entry name" value="LARGE RIBOSOMAL SUBUNIT PROTEIN BL17M"/>
    <property type="match status" value="1"/>
</dbReference>
<dbReference type="PANTHER" id="PTHR14413">
    <property type="entry name" value="RIBOSOMAL PROTEIN L17"/>
    <property type="match status" value="1"/>
</dbReference>
<dbReference type="Pfam" id="PF01196">
    <property type="entry name" value="Ribosomal_L17"/>
    <property type="match status" value="1"/>
</dbReference>
<dbReference type="SUPFAM" id="SSF64263">
    <property type="entry name" value="Prokaryotic ribosomal protein L17"/>
    <property type="match status" value="1"/>
</dbReference>
<dbReference type="PROSITE" id="PS01167">
    <property type="entry name" value="RIBOSOMAL_L17"/>
    <property type="match status" value="1"/>
</dbReference>
<keyword id="KW-1185">Reference proteome</keyword>
<keyword id="KW-0687">Ribonucleoprotein</keyword>
<keyword id="KW-0689">Ribosomal protein</keyword>
<reference key="1">
    <citation type="journal article" date="2011" name="Stand. Genomic Sci.">
        <title>Complete genome sequence of Rhodospirillum rubrum type strain (S1).</title>
        <authorList>
            <person name="Munk A.C."/>
            <person name="Copeland A."/>
            <person name="Lucas S."/>
            <person name="Lapidus A."/>
            <person name="Del Rio T.G."/>
            <person name="Barry K."/>
            <person name="Detter J.C."/>
            <person name="Hammon N."/>
            <person name="Israni S."/>
            <person name="Pitluck S."/>
            <person name="Brettin T."/>
            <person name="Bruce D."/>
            <person name="Han C."/>
            <person name="Tapia R."/>
            <person name="Gilna P."/>
            <person name="Schmutz J."/>
            <person name="Larimer F."/>
            <person name="Land M."/>
            <person name="Kyrpides N.C."/>
            <person name="Mavromatis K."/>
            <person name="Richardson P."/>
            <person name="Rohde M."/>
            <person name="Goeker M."/>
            <person name="Klenk H.P."/>
            <person name="Zhang Y."/>
            <person name="Roberts G.P."/>
            <person name="Reslewic S."/>
            <person name="Schwartz D.C."/>
        </authorList>
    </citation>
    <scope>NUCLEOTIDE SEQUENCE [LARGE SCALE GENOMIC DNA]</scope>
    <source>
        <strain>ATCC 11170 / ATH 1.1.1 / DSM 467 / LMG 4362 / NCIMB 8255 / S1</strain>
    </source>
</reference>
<gene>
    <name evidence="1" type="primary">rplQ</name>
    <name type="ordered locus">Rru_A2663</name>
</gene>
<feature type="chain" id="PRO_0000267932" description="Large ribosomal subunit protein bL17">
    <location>
        <begin position="1"/>
        <end position="140"/>
    </location>
</feature>
<feature type="region of interest" description="Disordered" evidence="2">
    <location>
        <begin position="121"/>
        <end position="140"/>
    </location>
</feature>
<protein>
    <recommendedName>
        <fullName evidence="1">Large ribosomal subunit protein bL17</fullName>
    </recommendedName>
    <alternativeName>
        <fullName evidence="3">50S ribosomal protein L17</fullName>
    </alternativeName>
</protein>
<organism>
    <name type="scientific">Rhodospirillum rubrum (strain ATCC 11170 / ATH 1.1.1 / DSM 467 / LMG 4362 / NCIMB 8255 / S1)</name>
    <dbReference type="NCBI Taxonomy" id="269796"/>
    <lineage>
        <taxon>Bacteria</taxon>
        <taxon>Pseudomonadati</taxon>
        <taxon>Pseudomonadota</taxon>
        <taxon>Alphaproteobacteria</taxon>
        <taxon>Rhodospirillales</taxon>
        <taxon>Rhodospirillaceae</taxon>
        <taxon>Rhodospirillum</taxon>
    </lineage>
</organism>
<evidence type="ECO:0000255" key="1">
    <source>
        <dbReference type="HAMAP-Rule" id="MF_01368"/>
    </source>
</evidence>
<evidence type="ECO:0000256" key="2">
    <source>
        <dbReference type="SAM" id="MobiDB-lite"/>
    </source>
</evidence>
<evidence type="ECO:0000305" key="3"/>
<sequence length="140" mass="15335">MRHGMSGRKLNRTSSHRKAMFANMAASLLKHEQIKTTLPKAKDLRPIAEKLITLGKGGTLHDRRQAHAILRDDAVVAKLFAVLGPRYKDRQGGYSRILKAGFRYGDAAPMAVIELVDRDPAAKGLDSGPTAEANDDDSEE</sequence>
<accession>Q2RQY5</accession>
<name>RL17_RHORT</name>